<evidence type="ECO:0000255" key="1">
    <source>
        <dbReference type="HAMAP-Rule" id="MF_00659"/>
    </source>
</evidence>
<name>Y791_NEIG1</name>
<feature type="chain" id="PRO_1000061876" description="UPF0250 protein NGO_0791">
    <location>
        <begin position="1"/>
        <end position="91"/>
    </location>
</feature>
<gene>
    <name type="ordered locus">NGO_0791</name>
</gene>
<dbReference type="EMBL" id="AE004969">
    <property type="protein sequence ID" value="AAW89505.1"/>
    <property type="molecule type" value="Genomic_DNA"/>
</dbReference>
<dbReference type="RefSeq" id="WP_002237935.1">
    <property type="nucleotide sequence ID" value="NC_002946.2"/>
</dbReference>
<dbReference type="RefSeq" id="YP_207917.1">
    <property type="nucleotide sequence ID" value="NC_002946.2"/>
</dbReference>
<dbReference type="SMR" id="Q5F8I2"/>
<dbReference type="STRING" id="242231.NGO_0791"/>
<dbReference type="KEGG" id="ngo:NGO_0791"/>
<dbReference type="PATRIC" id="fig|242231.10.peg.937"/>
<dbReference type="HOGENOM" id="CLU_161438_1_2_4"/>
<dbReference type="Proteomes" id="UP000000535">
    <property type="component" value="Chromosome"/>
</dbReference>
<dbReference type="Gene3D" id="3.30.70.260">
    <property type="match status" value="1"/>
</dbReference>
<dbReference type="HAMAP" id="MF_00659">
    <property type="entry name" value="UPF0250"/>
    <property type="match status" value="1"/>
</dbReference>
<dbReference type="InterPro" id="IPR007454">
    <property type="entry name" value="UPF0250_YbeD-like"/>
</dbReference>
<dbReference type="InterPro" id="IPR027471">
    <property type="entry name" value="YbeD-like_sf"/>
</dbReference>
<dbReference type="PANTHER" id="PTHR38036">
    <property type="entry name" value="UPF0250 PROTEIN YBED"/>
    <property type="match status" value="1"/>
</dbReference>
<dbReference type="PANTHER" id="PTHR38036:SF1">
    <property type="entry name" value="UPF0250 PROTEIN YBED"/>
    <property type="match status" value="1"/>
</dbReference>
<dbReference type="Pfam" id="PF04359">
    <property type="entry name" value="DUF493"/>
    <property type="match status" value="1"/>
</dbReference>
<dbReference type="SUPFAM" id="SSF117991">
    <property type="entry name" value="YbeD/HP0495-like"/>
    <property type="match status" value="1"/>
</dbReference>
<comment type="similarity">
    <text evidence="1">Belongs to the UPF0250 family.</text>
</comment>
<organism>
    <name type="scientific">Neisseria gonorrhoeae (strain ATCC 700825 / FA 1090)</name>
    <dbReference type="NCBI Taxonomy" id="242231"/>
    <lineage>
        <taxon>Bacteria</taxon>
        <taxon>Pseudomonadati</taxon>
        <taxon>Pseudomonadota</taxon>
        <taxon>Betaproteobacteria</taxon>
        <taxon>Neisseriales</taxon>
        <taxon>Neisseriaceae</taxon>
        <taxon>Neisseria</taxon>
    </lineage>
</organism>
<proteinExistence type="inferred from homology"/>
<reference key="1">
    <citation type="submission" date="2003-03" db="EMBL/GenBank/DDBJ databases">
        <title>The complete genome sequence of Neisseria gonorrhoeae.</title>
        <authorList>
            <person name="Lewis L.A."/>
            <person name="Gillaspy A.F."/>
            <person name="McLaughlin R.E."/>
            <person name="Gipson M."/>
            <person name="Ducey T.F."/>
            <person name="Ownbey T."/>
            <person name="Hartman K."/>
            <person name="Nydick C."/>
            <person name="Carson M.B."/>
            <person name="Vaughn J."/>
            <person name="Thomson C."/>
            <person name="Song L."/>
            <person name="Lin S."/>
            <person name="Yuan X."/>
            <person name="Najar F."/>
            <person name="Zhan M."/>
            <person name="Ren Q."/>
            <person name="Zhu H."/>
            <person name="Qi S."/>
            <person name="Kenton S.M."/>
            <person name="Lai H."/>
            <person name="White J.D."/>
            <person name="Clifton S."/>
            <person name="Roe B.A."/>
            <person name="Dyer D.W."/>
        </authorList>
    </citation>
    <scope>NUCLEOTIDE SEQUENCE [LARGE SCALE GENOMIC DNA]</scope>
    <source>
        <strain>ATCC 700825 / FA 1090</strain>
    </source>
</reference>
<sequence>MTEQENKTSLIEFPCTFPLKVMGAVHPEFEQAVLETVRLHAPDTQAHHITTRPSSKGNYTGATVQVKVENQEQLDNIYRALTSHELVKVVL</sequence>
<protein>
    <recommendedName>
        <fullName evidence="1">UPF0250 protein NGO_0791</fullName>
    </recommendedName>
</protein>
<accession>Q5F8I2</accession>
<keyword id="KW-1185">Reference proteome</keyword>